<gene>
    <name type="ordered locus">PMM0791</name>
</gene>
<sequence>MKYCKPKSKSILSLDVGLKRIGLAYCDSLFITVNILPALKRERNNNEIIIIKEHIKKHNLTGFIVGLPLDEAGGMTSQALDCKTYGEFLFNELKLPFSFVNEHSSTWESTNRFGVKKDKSGLIDSLSAKIILEQWIQEGPELKELVGNKQI</sequence>
<comment type="function">
    <text evidence="1">Could be a nuclease involved in processing of the 5'-end of pre-16S rRNA.</text>
</comment>
<comment type="subcellular location">
    <subcellularLocation>
        <location evidence="1">Cytoplasm</location>
    </subcellularLocation>
</comment>
<comment type="similarity">
    <text evidence="1">Belongs to the YqgF nuclease family.</text>
</comment>
<keyword id="KW-0963">Cytoplasm</keyword>
<keyword id="KW-0378">Hydrolase</keyword>
<keyword id="KW-0540">Nuclease</keyword>
<keyword id="KW-0690">Ribosome biogenesis</keyword>
<accession>Q7V1R4</accession>
<proteinExistence type="inferred from homology"/>
<protein>
    <recommendedName>
        <fullName evidence="1">Putative pre-16S rRNA nuclease</fullName>
        <ecNumber evidence="1">3.1.-.-</ecNumber>
    </recommendedName>
</protein>
<name>YQGF_PROMP</name>
<feature type="chain" id="PRO_0000172117" description="Putative pre-16S rRNA nuclease">
    <location>
        <begin position="1"/>
        <end position="151"/>
    </location>
</feature>
<dbReference type="EC" id="3.1.-.-" evidence="1"/>
<dbReference type="EMBL" id="BX548174">
    <property type="protein sequence ID" value="CAE19250.1"/>
    <property type="molecule type" value="Genomic_DNA"/>
</dbReference>
<dbReference type="SMR" id="Q7V1R4"/>
<dbReference type="STRING" id="59919.PMM0791"/>
<dbReference type="KEGG" id="pmm:PMM0791"/>
<dbReference type="eggNOG" id="COG0816">
    <property type="taxonomic scope" value="Bacteria"/>
</dbReference>
<dbReference type="HOGENOM" id="CLU_098240_3_1_3"/>
<dbReference type="OrthoDB" id="9796140at2"/>
<dbReference type="Proteomes" id="UP000001026">
    <property type="component" value="Chromosome"/>
</dbReference>
<dbReference type="GO" id="GO:0005829">
    <property type="term" value="C:cytosol"/>
    <property type="evidence" value="ECO:0007669"/>
    <property type="project" value="TreeGrafter"/>
</dbReference>
<dbReference type="GO" id="GO:0004518">
    <property type="term" value="F:nuclease activity"/>
    <property type="evidence" value="ECO:0007669"/>
    <property type="project" value="UniProtKB-KW"/>
</dbReference>
<dbReference type="GO" id="GO:0000967">
    <property type="term" value="P:rRNA 5'-end processing"/>
    <property type="evidence" value="ECO:0007669"/>
    <property type="project" value="UniProtKB-UniRule"/>
</dbReference>
<dbReference type="CDD" id="cd16964">
    <property type="entry name" value="YqgF"/>
    <property type="match status" value="1"/>
</dbReference>
<dbReference type="Gene3D" id="3.30.420.140">
    <property type="entry name" value="YqgF/RNase H-like domain"/>
    <property type="match status" value="1"/>
</dbReference>
<dbReference type="HAMAP" id="MF_00651">
    <property type="entry name" value="Nuclease_YqgF"/>
    <property type="match status" value="1"/>
</dbReference>
<dbReference type="InterPro" id="IPR012337">
    <property type="entry name" value="RNaseH-like_sf"/>
</dbReference>
<dbReference type="InterPro" id="IPR005227">
    <property type="entry name" value="YqgF"/>
</dbReference>
<dbReference type="InterPro" id="IPR006641">
    <property type="entry name" value="YqgF/RNaseH-like_dom"/>
</dbReference>
<dbReference type="InterPro" id="IPR037027">
    <property type="entry name" value="YqgF/RNaseH-like_dom_sf"/>
</dbReference>
<dbReference type="NCBIfam" id="TIGR00250">
    <property type="entry name" value="RNAse_H_YqgF"/>
    <property type="match status" value="1"/>
</dbReference>
<dbReference type="PANTHER" id="PTHR33317">
    <property type="entry name" value="POLYNUCLEOTIDYL TRANSFERASE, RIBONUCLEASE H-LIKE SUPERFAMILY PROTEIN"/>
    <property type="match status" value="1"/>
</dbReference>
<dbReference type="PANTHER" id="PTHR33317:SF4">
    <property type="entry name" value="POLYNUCLEOTIDYL TRANSFERASE, RIBONUCLEASE H-LIKE SUPERFAMILY PROTEIN"/>
    <property type="match status" value="1"/>
</dbReference>
<dbReference type="Pfam" id="PF03652">
    <property type="entry name" value="RuvX"/>
    <property type="match status" value="1"/>
</dbReference>
<dbReference type="SMART" id="SM00732">
    <property type="entry name" value="YqgFc"/>
    <property type="match status" value="1"/>
</dbReference>
<dbReference type="SUPFAM" id="SSF53098">
    <property type="entry name" value="Ribonuclease H-like"/>
    <property type="match status" value="1"/>
</dbReference>
<organism>
    <name type="scientific">Prochlorococcus marinus subsp. pastoris (strain CCMP1986 / NIES-2087 / MED4)</name>
    <dbReference type="NCBI Taxonomy" id="59919"/>
    <lineage>
        <taxon>Bacteria</taxon>
        <taxon>Bacillati</taxon>
        <taxon>Cyanobacteriota</taxon>
        <taxon>Cyanophyceae</taxon>
        <taxon>Synechococcales</taxon>
        <taxon>Prochlorococcaceae</taxon>
        <taxon>Prochlorococcus</taxon>
    </lineage>
</organism>
<evidence type="ECO:0000255" key="1">
    <source>
        <dbReference type="HAMAP-Rule" id="MF_00651"/>
    </source>
</evidence>
<reference key="1">
    <citation type="journal article" date="2003" name="Nature">
        <title>Genome divergence in two Prochlorococcus ecotypes reflects oceanic niche differentiation.</title>
        <authorList>
            <person name="Rocap G."/>
            <person name="Larimer F.W."/>
            <person name="Lamerdin J.E."/>
            <person name="Malfatti S."/>
            <person name="Chain P."/>
            <person name="Ahlgren N.A."/>
            <person name="Arellano A."/>
            <person name="Coleman M."/>
            <person name="Hauser L."/>
            <person name="Hess W.R."/>
            <person name="Johnson Z.I."/>
            <person name="Land M.L."/>
            <person name="Lindell D."/>
            <person name="Post A.F."/>
            <person name="Regala W."/>
            <person name="Shah M."/>
            <person name="Shaw S.L."/>
            <person name="Steglich C."/>
            <person name="Sullivan M.B."/>
            <person name="Ting C.S."/>
            <person name="Tolonen A."/>
            <person name="Webb E.A."/>
            <person name="Zinser E.R."/>
            <person name="Chisholm S.W."/>
        </authorList>
    </citation>
    <scope>NUCLEOTIDE SEQUENCE [LARGE SCALE GENOMIC DNA]</scope>
    <source>
        <strain>CCMP1986 / NIES-2087 / MED4</strain>
    </source>
</reference>